<evidence type="ECO:0000255" key="1">
    <source>
        <dbReference type="HAMAP-Rule" id="MF_01020"/>
    </source>
</evidence>
<organism>
    <name type="scientific">Nitrobacter hamburgensis (strain DSM 10229 / NCIMB 13809 / X14)</name>
    <dbReference type="NCBI Taxonomy" id="323097"/>
    <lineage>
        <taxon>Bacteria</taxon>
        <taxon>Pseudomonadati</taxon>
        <taxon>Pseudomonadota</taxon>
        <taxon>Alphaproteobacteria</taxon>
        <taxon>Hyphomicrobiales</taxon>
        <taxon>Nitrobacteraceae</taxon>
        <taxon>Nitrobacter</taxon>
    </lineage>
</organism>
<accession>Q1QRW9</accession>
<protein>
    <recommendedName>
        <fullName evidence="1">Phosphoribosyl-ATP pyrophosphatase</fullName>
        <shortName evidence="1">PRA-PH</shortName>
        <ecNumber evidence="1">3.6.1.31</ecNumber>
    </recommendedName>
</protein>
<name>HIS2_NITHX</name>
<gene>
    <name evidence="1" type="primary">hisE</name>
    <name type="ordered locus">Nham_0127</name>
</gene>
<proteinExistence type="inferred from homology"/>
<comment type="catalytic activity">
    <reaction evidence="1">
        <text>1-(5-phospho-beta-D-ribosyl)-ATP + H2O = 1-(5-phospho-beta-D-ribosyl)-5'-AMP + diphosphate + H(+)</text>
        <dbReference type="Rhea" id="RHEA:22828"/>
        <dbReference type="ChEBI" id="CHEBI:15377"/>
        <dbReference type="ChEBI" id="CHEBI:15378"/>
        <dbReference type="ChEBI" id="CHEBI:33019"/>
        <dbReference type="ChEBI" id="CHEBI:59457"/>
        <dbReference type="ChEBI" id="CHEBI:73183"/>
        <dbReference type="EC" id="3.6.1.31"/>
    </reaction>
</comment>
<comment type="pathway">
    <text evidence="1">Amino-acid biosynthesis; L-histidine biosynthesis; L-histidine from 5-phospho-alpha-D-ribose 1-diphosphate: step 2/9.</text>
</comment>
<comment type="subcellular location">
    <subcellularLocation>
        <location evidence="1">Cytoplasm</location>
    </subcellularLocation>
</comment>
<comment type="similarity">
    <text evidence="1">Belongs to the PRA-PH family.</text>
</comment>
<sequence>MPRFTIHDLAATIDARAASGGDASYTRKLLDKGSGHCAKKFGEEAVETVIAAIENDRHHLIAEGADLMFHFLVLLKARGVTFEDIEFALAQRTTMSGLEEKAARNRE</sequence>
<dbReference type="EC" id="3.6.1.31" evidence="1"/>
<dbReference type="EMBL" id="CP000319">
    <property type="protein sequence ID" value="ABE61028.1"/>
    <property type="molecule type" value="Genomic_DNA"/>
</dbReference>
<dbReference type="RefSeq" id="WP_011508735.1">
    <property type="nucleotide sequence ID" value="NC_007964.1"/>
</dbReference>
<dbReference type="SMR" id="Q1QRW9"/>
<dbReference type="STRING" id="323097.Nham_0127"/>
<dbReference type="KEGG" id="nha:Nham_0127"/>
<dbReference type="eggNOG" id="COG0140">
    <property type="taxonomic scope" value="Bacteria"/>
</dbReference>
<dbReference type="HOGENOM" id="CLU_123337_1_1_5"/>
<dbReference type="OrthoDB" id="9814738at2"/>
<dbReference type="UniPathway" id="UPA00031">
    <property type="reaction ID" value="UER00007"/>
</dbReference>
<dbReference type="Proteomes" id="UP000001953">
    <property type="component" value="Chromosome"/>
</dbReference>
<dbReference type="GO" id="GO:0005737">
    <property type="term" value="C:cytoplasm"/>
    <property type="evidence" value="ECO:0007669"/>
    <property type="project" value="UniProtKB-SubCell"/>
</dbReference>
<dbReference type="GO" id="GO:0005524">
    <property type="term" value="F:ATP binding"/>
    <property type="evidence" value="ECO:0007669"/>
    <property type="project" value="UniProtKB-KW"/>
</dbReference>
<dbReference type="GO" id="GO:0004636">
    <property type="term" value="F:phosphoribosyl-ATP diphosphatase activity"/>
    <property type="evidence" value="ECO:0007669"/>
    <property type="project" value="UniProtKB-UniRule"/>
</dbReference>
<dbReference type="GO" id="GO:0000105">
    <property type="term" value="P:L-histidine biosynthetic process"/>
    <property type="evidence" value="ECO:0007669"/>
    <property type="project" value="UniProtKB-UniRule"/>
</dbReference>
<dbReference type="CDD" id="cd11534">
    <property type="entry name" value="NTP-PPase_HisIE_like"/>
    <property type="match status" value="1"/>
</dbReference>
<dbReference type="Gene3D" id="1.10.287.1080">
    <property type="entry name" value="MazG-like"/>
    <property type="match status" value="1"/>
</dbReference>
<dbReference type="HAMAP" id="MF_01020">
    <property type="entry name" value="HisE"/>
    <property type="match status" value="1"/>
</dbReference>
<dbReference type="InterPro" id="IPR008179">
    <property type="entry name" value="HisE"/>
</dbReference>
<dbReference type="InterPro" id="IPR021130">
    <property type="entry name" value="PRib-ATP_PPHydrolase-like"/>
</dbReference>
<dbReference type="NCBIfam" id="TIGR03188">
    <property type="entry name" value="histidine_hisI"/>
    <property type="match status" value="1"/>
</dbReference>
<dbReference type="NCBIfam" id="NF001613">
    <property type="entry name" value="PRK00400.1-5"/>
    <property type="match status" value="1"/>
</dbReference>
<dbReference type="PANTHER" id="PTHR42945">
    <property type="entry name" value="HISTIDINE BIOSYNTHESIS BIFUNCTIONAL PROTEIN"/>
    <property type="match status" value="1"/>
</dbReference>
<dbReference type="PANTHER" id="PTHR42945:SF1">
    <property type="entry name" value="HISTIDINE BIOSYNTHESIS BIFUNCTIONAL PROTEIN HIS7"/>
    <property type="match status" value="1"/>
</dbReference>
<dbReference type="Pfam" id="PF01503">
    <property type="entry name" value="PRA-PH"/>
    <property type="match status" value="1"/>
</dbReference>
<dbReference type="SUPFAM" id="SSF101386">
    <property type="entry name" value="all-alpha NTP pyrophosphatases"/>
    <property type="match status" value="1"/>
</dbReference>
<feature type="chain" id="PRO_1000063364" description="Phosphoribosyl-ATP pyrophosphatase">
    <location>
        <begin position="1"/>
        <end position="107"/>
    </location>
</feature>
<reference key="1">
    <citation type="submission" date="2006-03" db="EMBL/GenBank/DDBJ databases">
        <title>Complete sequence of chromosome of Nitrobacter hamburgensis X14.</title>
        <authorList>
            <consortium name="US DOE Joint Genome Institute"/>
            <person name="Copeland A."/>
            <person name="Lucas S."/>
            <person name="Lapidus A."/>
            <person name="Barry K."/>
            <person name="Detter J.C."/>
            <person name="Glavina del Rio T."/>
            <person name="Hammon N."/>
            <person name="Israni S."/>
            <person name="Dalin E."/>
            <person name="Tice H."/>
            <person name="Pitluck S."/>
            <person name="Chain P."/>
            <person name="Malfatti S."/>
            <person name="Shin M."/>
            <person name="Vergez L."/>
            <person name="Schmutz J."/>
            <person name="Larimer F."/>
            <person name="Land M."/>
            <person name="Hauser L."/>
            <person name="Kyrpides N."/>
            <person name="Ivanova N."/>
            <person name="Ward B."/>
            <person name="Arp D."/>
            <person name="Klotz M."/>
            <person name="Stein L."/>
            <person name="O'Mullan G."/>
            <person name="Starkenburg S."/>
            <person name="Sayavedra L."/>
            <person name="Poret-Peterson A.T."/>
            <person name="Gentry M.E."/>
            <person name="Bruce D."/>
            <person name="Richardson P."/>
        </authorList>
    </citation>
    <scope>NUCLEOTIDE SEQUENCE [LARGE SCALE GENOMIC DNA]</scope>
    <source>
        <strain>DSM 10229 / NCIMB 13809 / X14</strain>
    </source>
</reference>
<keyword id="KW-0028">Amino-acid biosynthesis</keyword>
<keyword id="KW-0067">ATP-binding</keyword>
<keyword id="KW-0963">Cytoplasm</keyword>
<keyword id="KW-0368">Histidine biosynthesis</keyword>
<keyword id="KW-0378">Hydrolase</keyword>
<keyword id="KW-0547">Nucleotide-binding</keyword>
<keyword id="KW-1185">Reference proteome</keyword>